<organism>
    <name type="scientific">Bacillus pumilus (strain SAFR-032)</name>
    <dbReference type="NCBI Taxonomy" id="315750"/>
    <lineage>
        <taxon>Bacteria</taxon>
        <taxon>Bacillati</taxon>
        <taxon>Bacillota</taxon>
        <taxon>Bacilli</taxon>
        <taxon>Bacillales</taxon>
        <taxon>Bacillaceae</taxon>
        <taxon>Bacillus</taxon>
    </lineage>
</organism>
<sequence>MNTHKQEDIQLVIITGMSGAGKTVAIQSFEDLGYFCVDNLPPSLLPKFLELMKESNSKMSKVALVMDLRGREFFDSLIAALDEMSDLGWITPRILFLDANDKVLVSRYKETRRSHPLATTGLPLEGIAMERDLLEELKGRAQMIFDTSDLKPKQLREKIVAHFATSQGQVFTVNVMSFGFKYGLPIDADLVFDVRFLPNPYYIESMRPQTGNDEEVRSYVMKWSETQKFTEKLIDLLSFMLPSYKREGKSQLVIAIGCTGGQHRSVTLANYLSEYFKNDYYTHVTHRDIEKRSRK</sequence>
<comment type="function">
    <text evidence="1">Displays ATPase and GTPase activities.</text>
</comment>
<comment type="similarity">
    <text evidence="1">Belongs to the RapZ-like family.</text>
</comment>
<dbReference type="EMBL" id="CP000813">
    <property type="protein sequence ID" value="ABV63769.2"/>
    <property type="molecule type" value="Genomic_DNA"/>
</dbReference>
<dbReference type="SMR" id="A8FHQ2"/>
<dbReference type="STRING" id="315750.BPUM_3115"/>
<dbReference type="GeneID" id="5622406"/>
<dbReference type="KEGG" id="bpu:BPUM_3115"/>
<dbReference type="eggNOG" id="COG1660">
    <property type="taxonomic scope" value="Bacteria"/>
</dbReference>
<dbReference type="HOGENOM" id="CLU_059558_0_0_9"/>
<dbReference type="Proteomes" id="UP000001355">
    <property type="component" value="Chromosome"/>
</dbReference>
<dbReference type="GO" id="GO:0005524">
    <property type="term" value="F:ATP binding"/>
    <property type="evidence" value="ECO:0007669"/>
    <property type="project" value="UniProtKB-UniRule"/>
</dbReference>
<dbReference type="GO" id="GO:0005525">
    <property type="term" value="F:GTP binding"/>
    <property type="evidence" value="ECO:0007669"/>
    <property type="project" value="UniProtKB-UniRule"/>
</dbReference>
<dbReference type="Gene3D" id="3.40.50.300">
    <property type="entry name" value="P-loop containing nucleotide triphosphate hydrolases"/>
    <property type="match status" value="1"/>
</dbReference>
<dbReference type="HAMAP" id="MF_00636">
    <property type="entry name" value="RapZ_like"/>
    <property type="match status" value="1"/>
</dbReference>
<dbReference type="InterPro" id="IPR027417">
    <property type="entry name" value="P-loop_NTPase"/>
</dbReference>
<dbReference type="InterPro" id="IPR005337">
    <property type="entry name" value="RapZ-like"/>
</dbReference>
<dbReference type="InterPro" id="IPR053930">
    <property type="entry name" value="RapZ-like_N"/>
</dbReference>
<dbReference type="InterPro" id="IPR053931">
    <property type="entry name" value="RapZ_C"/>
</dbReference>
<dbReference type="NCBIfam" id="NF003828">
    <property type="entry name" value="PRK05416.1"/>
    <property type="match status" value="1"/>
</dbReference>
<dbReference type="PANTHER" id="PTHR30448">
    <property type="entry name" value="RNASE ADAPTER PROTEIN RAPZ"/>
    <property type="match status" value="1"/>
</dbReference>
<dbReference type="PANTHER" id="PTHR30448:SF0">
    <property type="entry name" value="RNASE ADAPTER PROTEIN RAPZ"/>
    <property type="match status" value="1"/>
</dbReference>
<dbReference type="Pfam" id="PF22740">
    <property type="entry name" value="PapZ_C"/>
    <property type="match status" value="1"/>
</dbReference>
<dbReference type="Pfam" id="PF03668">
    <property type="entry name" value="RapZ-like_N"/>
    <property type="match status" value="1"/>
</dbReference>
<dbReference type="PIRSF" id="PIRSF005052">
    <property type="entry name" value="P-loopkin"/>
    <property type="match status" value="1"/>
</dbReference>
<dbReference type="SUPFAM" id="SSF52540">
    <property type="entry name" value="P-loop containing nucleoside triphosphate hydrolases"/>
    <property type="match status" value="1"/>
</dbReference>
<proteinExistence type="inferred from homology"/>
<accession>A8FHQ2</accession>
<gene>
    <name type="ordered locus">BPUM_3115</name>
</gene>
<feature type="chain" id="PRO_0000383216" description="Nucleotide-binding protein BPUM_3115">
    <location>
        <begin position="1"/>
        <end position="295"/>
    </location>
</feature>
<feature type="binding site" evidence="1">
    <location>
        <begin position="16"/>
        <end position="23"/>
    </location>
    <ligand>
        <name>ATP</name>
        <dbReference type="ChEBI" id="CHEBI:30616"/>
    </ligand>
</feature>
<feature type="binding site" evidence="1">
    <location>
        <begin position="67"/>
        <end position="70"/>
    </location>
    <ligand>
        <name>GTP</name>
        <dbReference type="ChEBI" id="CHEBI:37565"/>
    </ligand>
</feature>
<evidence type="ECO:0000255" key="1">
    <source>
        <dbReference type="HAMAP-Rule" id="MF_00636"/>
    </source>
</evidence>
<keyword id="KW-0067">ATP-binding</keyword>
<keyword id="KW-0342">GTP-binding</keyword>
<keyword id="KW-0547">Nucleotide-binding</keyword>
<protein>
    <recommendedName>
        <fullName evidence="1">Nucleotide-binding protein BPUM_3115</fullName>
    </recommendedName>
</protein>
<reference key="1">
    <citation type="journal article" date="2007" name="PLoS ONE">
        <title>Paradoxical DNA repair and peroxide resistance gene conservation in Bacillus pumilus SAFR-032.</title>
        <authorList>
            <person name="Gioia J."/>
            <person name="Yerrapragada S."/>
            <person name="Qin X."/>
            <person name="Jiang H."/>
            <person name="Igboeli O.C."/>
            <person name="Muzny D."/>
            <person name="Dugan-Rocha S."/>
            <person name="Ding Y."/>
            <person name="Hawes A."/>
            <person name="Liu W."/>
            <person name="Perez L."/>
            <person name="Kovar C."/>
            <person name="Dinh H."/>
            <person name="Lee S."/>
            <person name="Nazareth L."/>
            <person name="Blyth P."/>
            <person name="Holder M."/>
            <person name="Buhay C."/>
            <person name="Tirumalai M.R."/>
            <person name="Liu Y."/>
            <person name="Dasgupta I."/>
            <person name="Bokhetache L."/>
            <person name="Fujita M."/>
            <person name="Karouia F."/>
            <person name="Eswara Moorthy P."/>
            <person name="Siefert J."/>
            <person name="Uzman A."/>
            <person name="Buzumbo P."/>
            <person name="Verma A."/>
            <person name="Zwiya H."/>
            <person name="McWilliams B.D."/>
            <person name="Olowu A."/>
            <person name="Clinkenbeard K.D."/>
            <person name="Newcombe D."/>
            <person name="Golebiewski L."/>
            <person name="Petrosino J.F."/>
            <person name="Nicholson W.L."/>
            <person name="Fox G.E."/>
            <person name="Venkateswaran K."/>
            <person name="Highlander S.K."/>
            <person name="Weinstock G.M."/>
        </authorList>
    </citation>
    <scope>NUCLEOTIDE SEQUENCE [LARGE SCALE GENOMIC DNA]</scope>
    <source>
        <strain>SAFR-032</strain>
    </source>
</reference>
<reference key="2">
    <citation type="journal article" date="2016" name="PLoS ONE">
        <title>Bacillus pumilus SAFR-032 Genome Revisited: Sequence Update and Re-Annotation.</title>
        <authorList>
            <person name="Stepanov V.G."/>
            <person name="Tirumalai M.R."/>
            <person name="Montazari S."/>
            <person name="Checinska A."/>
            <person name="Venkateswaran K."/>
            <person name="Fox G.E."/>
        </authorList>
    </citation>
    <scope>SEQUENCE REVISION TO N-TERMINUS</scope>
    <source>
        <strain>SAFR-032</strain>
    </source>
</reference>
<name>Y3115_BACP2</name>